<feature type="signal peptide" evidence="1">
    <location>
        <begin position="1"/>
        <end position="26"/>
    </location>
</feature>
<feature type="chain" id="PRO_1000071792" description="Outer-membrane lipoprotein LolB">
    <location>
        <begin position="27"/>
        <end position="207"/>
    </location>
</feature>
<feature type="lipid moiety-binding region" description="N-palmitoyl cysteine" evidence="1">
    <location>
        <position position="27"/>
    </location>
</feature>
<feature type="lipid moiety-binding region" description="S-diacylglycerol cysteine" evidence="1">
    <location>
        <position position="27"/>
    </location>
</feature>
<comment type="function">
    <text evidence="1">Plays a critical role in the incorporation of lipoproteins in the outer membrane after they are released by the LolA protein.</text>
</comment>
<comment type="subunit">
    <text evidence="1">Monomer.</text>
</comment>
<comment type="subcellular location">
    <subcellularLocation>
        <location evidence="1">Cell outer membrane</location>
        <topology evidence="1">Lipid-anchor</topology>
    </subcellularLocation>
</comment>
<comment type="similarity">
    <text evidence="1">Belongs to the LolB family.</text>
</comment>
<reference key="1">
    <citation type="journal article" date="2007" name="PLoS ONE">
        <title>Complete genomic characterization of a pathogenic A.II strain of Francisella tularensis subspecies tularensis.</title>
        <authorList>
            <person name="Beckstrom-Sternberg S.M."/>
            <person name="Auerbach R.K."/>
            <person name="Godbole S."/>
            <person name="Pearson J.V."/>
            <person name="Beckstrom-Sternberg J.S."/>
            <person name="Deng Z."/>
            <person name="Munk C."/>
            <person name="Kubota K."/>
            <person name="Zhou Y."/>
            <person name="Bruce D."/>
            <person name="Noronha J."/>
            <person name="Scheuermann R.H."/>
            <person name="Wang A."/>
            <person name="Wei X."/>
            <person name="Wang J."/>
            <person name="Hao J."/>
            <person name="Wagner D.M."/>
            <person name="Brettin T.S."/>
            <person name="Brown N."/>
            <person name="Gilna P."/>
            <person name="Keim P.S."/>
        </authorList>
    </citation>
    <scope>NUCLEOTIDE SEQUENCE [LARGE SCALE GENOMIC DNA]</scope>
    <source>
        <strain>WY96-3418</strain>
    </source>
</reference>
<keyword id="KW-0998">Cell outer membrane</keyword>
<keyword id="KW-0143">Chaperone</keyword>
<keyword id="KW-0449">Lipoprotein</keyword>
<keyword id="KW-0472">Membrane</keyword>
<keyword id="KW-0564">Palmitate</keyword>
<keyword id="KW-0653">Protein transport</keyword>
<keyword id="KW-0732">Signal</keyword>
<keyword id="KW-0813">Transport</keyword>
<proteinExistence type="inferred from homology"/>
<organism>
    <name type="scientific">Francisella tularensis subsp. tularensis (strain WY96-3418)</name>
    <dbReference type="NCBI Taxonomy" id="418136"/>
    <lineage>
        <taxon>Bacteria</taxon>
        <taxon>Pseudomonadati</taxon>
        <taxon>Pseudomonadota</taxon>
        <taxon>Gammaproteobacteria</taxon>
        <taxon>Thiotrichales</taxon>
        <taxon>Francisellaceae</taxon>
        <taxon>Francisella</taxon>
    </lineage>
</organism>
<dbReference type="EMBL" id="CP000608">
    <property type="protein sequence ID" value="ABO47494.1"/>
    <property type="molecule type" value="Genomic_DNA"/>
</dbReference>
<dbReference type="SMR" id="A4IZZ3"/>
<dbReference type="KEGG" id="ftw:FTW_1829"/>
<dbReference type="HOGENOM" id="CLU_092816_2_1_6"/>
<dbReference type="GO" id="GO:0009279">
    <property type="term" value="C:cell outer membrane"/>
    <property type="evidence" value="ECO:0007669"/>
    <property type="project" value="UniProtKB-SubCell"/>
</dbReference>
<dbReference type="GO" id="GO:0044874">
    <property type="term" value="P:lipoprotein localization to outer membrane"/>
    <property type="evidence" value="ECO:0007669"/>
    <property type="project" value="UniProtKB-UniRule"/>
</dbReference>
<dbReference type="GO" id="GO:0015031">
    <property type="term" value="P:protein transport"/>
    <property type="evidence" value="ECO:0007669"/>
    <property type="project" value="UniProtKB-KW"/>
</dbReference>
<dbReference type="CDD" id="cd16326">
    <property type="entry name" value="LolB"/>
    <property type="match status" value="1"/>
</dbReference>
<dbReference type="Gene3D" id="2.50.20.10">
    <property type="entry name" value="Lipoprotein localisation LolA/LolB/LppX"/>
    <property type="match status" value="1"/>
</dbReference>
<dbReference type="HAMAP" id="MF_00233">
    <property type="entry name" value="LolB"/>
    <property type="match status" value="1"/>
</dbReference>
<dbReference type="InterPro" id="IPR029046">
    <property type="entry name" value="LolA/LolB/LppX"/>
</dbReference>
<dbReference type="InterPro" id="IPR004565">
    <property type="entry name" value="OM_lipoprot_LolB"/>
</dbReference>
<dbReference type="NCBIfam" id="TIGR00548">
    <property type="entry name" value="lolB"/>
    <property type="match status" value="1"/>
</dbReference>
<dbReference type="Pfam" id="PF03550">
    <property type="entry name" value="LolB"/>
    <property type="match status" value="1"/>
</dbReference>
<dbReference type="SUPFAM" id="SSF89392">
    <property type="entry name" value="Prokaryotic lipoproteins and lipoprotein localization factors"/>
    <property type="match status" value="1"/>
</dbReference>
<dbReference type="PROSITE" id="PS51257">
    <property type="entry name" value="PROKAR_LIPOPROTEIN"/>
    <property type="match status" value="1"/>
</dbReference>
<protein>
    <recommendedName>
        <fullName evidence="1">Outer-membrane lipoprotein LolB</fullName>
    </recommendedName>
</protein>
<accession>A4IZZ3</accession>
<name>LOLB_FRATW</name>
<gene>
    <name evidence="1" type="primary">lolB</name>
    <name type="ordered locus">FTW_1829</name>
</gene>
<sequence>MSKLKIDTKRRFSLLIALVLIISLSSCATTQTNVTTKTVFNQETTYHNLLKLKKWQANGVIGIIYDNQAESANYTYLQDGDNFSIKLYGPLGIGSIEIKGDTNSVSLANSKGQKLTAKDAKTLMLEQLGWYVPVEGLKYWIKAIAIPNIRQTSELNTNNLLSKLSQNGWSISYSNYQLVDSKYPLPTKIRMSRDNLTLKIVIKSWQI</sequence>
<evidence type="ECO:0000255" key="1">
    <source>
        <dbReference type="HAMAP-Rule" id="MF_00233"/>
    </source>
</evidence>